<proteinExistence type="inferred from homology"/>
<accession>Q2K3B7</accession>
<sequence>MASYKDVKKVVLAYSGGLDTSIILKWLQTELGAEVVTFTADLGQGEELEPARKKAEMLGIKEIYIEDVREEFVRDFVFPMFRANAVYEGVYLLGTSIARPLISKHLIDIARKTGADAIAHGATGKGNDQVRFELSAYALNPDIKIIAPWRDWAFKSRTELLAFAEQHQIPVAKDKKGEAPFSVDANLLHSSSEGKVLEDPAQEAPEYVHMRTISPEAAPDKATVIKVGFRKGDAVSINGVEMSPATLLATLNTYGRDNGIGRLDLVENRFVGMKSRGVYETPGGTILLSAHRAIESITLDRGAAHLKDEIMPRYAELIYYGFWFSPEREMLQALIDKSQEYVEGEVTLKLYKGNVMVIGRESEKSLYSDKLVTFEDDQGAYDQKDAAGFIKLNALRLRTLGKRNLAK</sequence>
<comment type="catalytic activity">
    <reaction evidence="1">
        <text>L-citrulline + L-aspartate + ATP = 2-(N(omega)-L-arginino)succinate + AMP + diphosphate + H(+)</text>
        <dbReference type="Rhea" id="RHEA:10932"/>
        <dbReference type="ChEBI" id="CHEBI:15378"/>
        <dbReference type="ChEBI" id="CHEBI:29991"/>
        <dbReference type="ChEBI" id="CHEBI:30616"/>
        <dbReference type="ChEBI" id="CHEBI:33019"/>
        <dbReference type="ChEBI" id="CHEBI:57472"/>
        <dbReference type="ChEBI" id="CHEBI:57743"/>
        <dbReference type="ChEBI" id="CHEBI:456215"/>
        <dbReference type="EC" id="6.3.4.5"/>
    </reaction>
</comment>
<comment type="pathway">
    <text evidence="1">Amino-acid biosynthesis; L-arginine biosynthesis; L-arginine from L-ornithine and carbamoyl phosphate: step 2/3.</text>
</comment>
<comment type="subunit">
    <text evidence="1">Homotetramer.</text>
</comment>
<comment type="subcellular location">
    <subcellularLocation>
        <location evidence="1">Cytoplasm</location>
    </subcellularLocation>
</comment>
<comment type="similarity">
    <text evidence="1">Belongs to the argininosuccinate synthase family. Type 1 subfamily.</text>
</comment>
<protein>
    <recommendedName>
        <fullName evidence="1">Argininosuccinate synthase</fullName>
        <ecNumber evidence="1">6.3.4.5</ecNumber>
    </recommendedName>
    <alternativeName>
        <fullName evidence="1">Citrulline--aspartate ligase</fullName>
    </alternativeName>
</protein>
<dbReference type="EC" id="6.3.4.5" evidence="1"/>
<dbReference type="EMBL" id="CP000133">
    <property type="protein sequence ID" value="ABC92669.1"/>
    <property type="molecule type" value="Genomic_DNA"/>
</dbReference>
<dbReference type="RefSeq" id="WP_011427116.1">
    <property type="nucleotide sequence ID" value="NC_007761.1"/>
</dbReference>
<dbReference type="SMR" id="Q2K3B7"/>
<dbReference type="KEGG" id="ret:RHE_CH03924"/>
<dbReference type="eggNOG" id="COG0137">
    <property type="taxonomic scope" value="Bacteria"/>
</dbReference>
<dbReference type="HOGENOM" id="CLU_032784_4_2_5"/>
<dbReference type="OrthoDB" id="9801641at2"/>
<dbReference type="UniPathway" id="UPA00068">
    <property type="reaction ID" value="UER00113"/>
</dbReference>
<dbReference type="Proteomes" id="UP000001936">
    <property type="component" value="Chromosome"/>
</dbReference>
<dbReference type="GO" id="GO:0005737">
    <property type="term" value="C:cytoplasm"/>
    <property type="evidence" value="ECO:0007669"/>
    <property type="project" value="UniProtKB-SubCell"/>
</dbReference>
<dbReference type="GO" id="GO:0004055">
    <property type="term" value="F:argininosuccinate synthase activity"/>
    <property type="evidence" value="ECO:0007669"/>
    <property type="project" value="UniProtKB-UniRule"/>
</dbReference>
<dbReference type="GO" id="GO:0005524">
    <property type="term" value="F:ATP binding"/>
    <property type="evidence" value="ECO:0007669"/>
    <property type="project" value="UniProtKB-UniRule"/>
</dbReference>
<dbReference type="GO" id="GO:0000053">
    <property type="term" value="P:argininosuccinate metabolic process"/>
    <property type="evidence" value="ECO:0007669"/>
    <property type="project" value="TreeGrafter"/>
</dbReference>
<dbReference type="GO" id="GO:0006526">
    <property type="term" value="P:L-arginine biosynthetic process"/>
    <property type="evidence" value="ECO:0007669"/>
    <property type="project" value="UniProtKB-UniRule"/>
</dbReference>
<dbReference type="GO" id="GO:0000050">
    <property type="term" value="P:urea cycle"/>
    <property type="evidence" value="ECO:0007669"/>
    <property type="project" value="TreeGrafter"/>
</dbReference>
<dbReference type="CDD" id="cd01999">
    <property type="entry name" value="ASS"/>
    <property type="match status" value="1"/>
</dbReference>
<dbReference type="FunFam" id="3.40.50.620:FF:000019">
    <property type="entry name" value="Argininosuccinate synthase"/>
    <property type="match status" value="1"/>
</dbReference>
<dbReference type="FunFam" id="3.90.1260.10:FF:000007">
    <property type="entry name" value="Argininosuccinate synthase"/>
    <property type="match status" value="1"/>
</dbReference>
<dbReference type="Gene3D" id="3.90.1260.10">
    <property type="entry name" value="Argininosuccinate synthetase, chain A, domain 2"/>
    <property type="match status" value="1"/>
</dbReference>
<dbReference type="Gene3D" id="3.40.50.620">
    <property type="entry name" value="HUPs"/>
    <property type="match status" value="1"/>
</dbReference>
<dbReference type="Gene3D" id="1.20.5.470">
    <property type="entry name" value="Single helix bin"/>
    <property type="match status" value="1"/>
</dbReference>
<dbReference type="HAMAP" id="MF_00005">
    <property type="entry name" value="Arg_succ_synth_type1"/>
    <property type="match status" value="1"/>
</dbReference>
<dbReference type="InterPro" id="IPR048268">
    <property type="entry name" value="Arginosuc_syn_C"/>
</dbReference>
<dbReference type="InterPro" id="IPR048267">
    <property type="entry name" value="Arginosuc_syn_N"/>
</dbReference>
<dbReference type="InterPro" id="IPR001518">
    <property type="entry name" value="Arginosuc_synth"/>
</dbReference>
<dbReference type="InterPro" id="IPR018223">
    <property type="entry name" value="Arginosuc_synth_CS"/>
</dbReference>
<dbReference type="InterPro" id="IPR023434">
    <property type="entry name" value="Arginosuc_synth_type_1_subfam"/>
</dbReference>
<dbReference type="InterPro" id="IPR024074">
    <property type="entry name" value="AS_cat/multimer_dom_body"/>
</dbReference>
<dbReference type="InterPro" id="IPR014729">
    <property type="entry name" value="Rossmann-like_a/b/a_fold"/>
</dbReference>
<dbReference type="NCBIfam" id="TIGR00032">
    <property type="entry name" value="argG"/>
    <property type="match status" value="1"/>
</dbReference>
<dbReference type="NCBIfam" id="NF001770">
    <property type="entry name" value="PRK00509.1"/>
    <property type="match status" value="1"/>
</dbReference>
<dbReference type="PANTHER" id="PTHR11587">
    <property type="entry name" value="ARGININOSUCCINATE SYNTHASE"/>
    <property type="match status" value="1"/>
</dbReference>
<dbReference type="PANTHER" id="PTHR11587:SF2">
    <property type="entry name" value="ARGININOSUCCINATE SYNTHASE"/>
    <property type="match status" value="1"/>
</dbReference>
<dbReference type="Pfam" id="PF20979">
    <property type="entry name" value="Arginosuc_syn_C"/>
    <property type="match status" value="1"/>
</dbReference>
<dbReference type="Pfam" id="PF00764">
    <property type="entry name" value="Arginosuc_synth"/>
    <property type="match status" value="1"/>
</dbReference>
<dbReference type="SUPFAM" id="SSF52402">
    <property type="entry name" value="Adenine nucleotide alpha hydrolases-like"/>
    <property type="match status" value="1"/>
</dbReference>
<dbReference type="SUPFAM" id="SSF69864">
    <property type="entry name" value="Argininosuccinate synthetase, C-terminal domain"/>
    <property type="match status" value="1"/>
</dbReference>
<dbReference type="PROSITE" id="PS00564">
    <property type="entry name" value="ARGININOSUCCIN_SYN_1"/>
    <property type="match status" value="1"/>
</dbReference>
<dbReference type="PROSITE" id="PS00565">
    <property type="entry name" value="ARGININOSUCCIN_SYN_2"/>
    <property type="match status" value="1"/>
</dbReference>
<reference key="1">
    <citation type="journal article" date="2006" name="Proc. Natl. Acad. Sci. U.S.A.">
        <title>The partitioned Rhizobium etli genome: genetic and metabolic redundancy in seven interacting replicons.</title>
        <authorList>
            <person name="Gonzalez V."/>
            <person name="Santamaria R.I."/>
            <person name="Bustos P."/>
            <person name="Hernandez-Gonzalez I."/>
            <person name="Medrano-Soto A."/>
            <person name="Moreno-Hagelsieb G."/>
            <person name="Janga S.C."/>
            <person name="Ramirez M.A."/>
            <person name="Jimenez-Jacinto V."/>
            <person name="Collado-Vides J."/>
            <person name="Davila G."/>
        </authorList>
    </citation>
    <scope>NUCLEOTIDE SEQUENCE [LARGE SCALE GENOMIC DNA]</scope>
    <source>
        <strain>ATCC 51251 / DSM 11541 / JCM 21823 / NBRC 15573 / CFN 42</strain>
    </source>
</reference>
<gene>
    <name evidence="1" type="primary">argG</name>
    <name type="ordered locus">RHE_CH03924</name>
</gene>
<keyword id="KW-0028">Amino-acid biosynthesis</keyword>
<keyword id="KW-0055">Arginine biosynthesis</keyword>
<keyword id="KW-0067">ATP-binding</keyword>
<keyword id="KW-0963">Cytoplasm</keyword>
<keyword id="KW-0436">Ligase</keyword>
<keyword id="KW-0547">Nucleotide-binding</keyword>
<keyword id="KW-1185">Reference proteome</keyword>
<name>ASSY_RHIEC</name>
<feature type="chain" id="PRO_0000263960" description="Argininosuccinate synthase">
    <location>
        <begin position="1"/>
        <end position="407"/>
    </location>
</feature>
<feature type="binding site" evidence="1">
    <location>
        <begin position="13"/>
        <end position="21"/>
    </location>
    <ligand>
        <name>ATP</name>
        <dbReference type="ChEBI" id="CHEBI:30616"/>
    </ligand>
</feature>
<feature type="binding site" evidence="1">
    <location>
        <position position="40"/>
    </location>
    <ligand>
        <name>ATP</name>
        <dbReference type="ChEBI" id="CHEBI:30616"/>
    </ligand>
</feature>
<feature type="binding site" evidence="1">
    <location>
        <position position="91"/>
    </location>
    <ligand>
        <name>L-citrulline</name>
        <dbReference type="ChEBI" id="CHEBI:57743"/>
    </ligand>
</feature>
<feature type="binding site" evidence="1">
    <location>
        <position position="96"/>
    </location>
    <ligand>
        <name>L-citrulline</name>
        <dbReference type="ChEBI" id="CHEBI:57743"/>
    </ligand>
</feature>
<feature type="binding site" evidence="1">
    <location>
        <position position="121"/>
    </location>
    <ligand>
        <name>ATP</name>
        <dbReference type="ChEBI" id="CHEBI:30616"/>
    </ligand>
</feature>
<feature type="binding site" evidence="1">
    <location>
        <position position="123"/>
    </location>
    <ligand>
        <name>L-aspartate</name>
        <dbReference type="ChEBI" id="CHEBI:29991"/>
    </ligand>
</feature>
<feature type="binding site" evidence="1">
    <location>
        <position position="127"/>
    </location>
    <ligand>
        <name>L-aspartate</name>
        <dbReference type="ChEBI" id="CHEBI:29991"/>
    </ligand>
</feature>
<feature type="binding site" evidence="1">
    <location>
        <position position="127"/>
    </location>
    <ligand>
        <name>L-citrulline</name>
        <dbReference type="ChEBI" id="CHEBI:57743"/>
    </ligand>
</feature>
<feature type="binding site" evidence="1">
    <location>
        <position position="128"/>
    </location>
    <ligand>
        <name>L-aspartate</name>
        <dbReference type="ChEBI" id="CHEBI:29991"/>
    </ligand>
</feature>
<feature type="binding site" evidence="1">
    <location>
        <position position="131"/>
    </location>
    <ligand>
        <name>L-citrulline</name>
        <dbReference type="ChEBI" id="CHEBI:57743"/>
    </ligand>
</feature>
<feature type="binding site" evidence="1">
    <location>
        <position position="182"/>
    </location>
    <ligand>
        <name>L-citrulline</name>
        <dbReference type="ChEBI" id="CHEBI:57743"/>
    </ligand>
</feature>
<feature type="binding site" evidence="1">
    <location>
        <position position="191"/>
    </location>
    <ligand>
        <name>L-citrulline</name>
        <dbReference type="ChEBI" id="CHEBI:57743"/>
    </ligand>
</feature>
<feature type="binding site" evidence="1">
    <location>
        <position position="267"/>
    </location>
    <ligand>
        <name>L-citrulline</name>
        <dbReference type="ChEBI" id="CHEBI:57743"/>
    </ligand>
</feature>
<feature type="binding site" evidence="1">
    <location>
        <position position="279"/>
    </location>
    <ligand>
        <name>L-citrulline</name>
        <dbReference type="ChEBI" id="CHEBI:57743"/>
    </ligand>
</feature>
<evidence type="ECO:0000255" key="1">
    <source>
        <dbReference type="HAMAP-Rule" id="MF_00005"/>
    </source>
</evidence>
<organism>
    <name type="scientific">Rhizobium etli (strain ATCC 51251 / DSM 11541 / JCM 21823 / NBRC 15573 / CFN 42)</name>
    <dbReference type="NCBI Taxonomy" id="347834"/>
    <lineage>
        <taxon>Bacteria</taxon>
        <taxon>Pseudomonadati</taxon>
        <taxon>Pseudomonadota</taxon>
        <taxon>Alphaproteobacteria</taxon>
        <taxon>Hyphomicrobiales</taxon>
        <taxon>Rhizobiaceae</taxon>
        <taxon>Rhizobium/Agrobacterium group</taxon>
        <taxon>Rhizobium</taxon>
    </lineage>
</organism>